<proteinExistence type="inferred from homology"/>
<reference key="1">
    <citation type="journal article" date="2008" name="DNA Res.">
        <title>Determination of the genome sequence of Porphyromonas gingivalis strain ATCC 33277 and genomic comparison with strain W83 revealed extensive genome rearrangements in P. gingivalis.</title>
        <authorList>
            <person name="Naito M."/>
            <person name="Hirakawa H."/>
            <person name="Yamashita A."/>
            <person name="Ohara N."/>
            <person name="Shoji M."/>
            <person name="Yukitake H."/>
            <person name="Nakayama K."/>
            <person name="Toh H."/>
            <person name="Yoshimura F."/>
            <person name="Kuhara S."/>
            <person name="Hattori M."/>
            <person name="Hayashi T."/>
            <person name="Nakayama K."/>
        </authorList>
    </citation>
    <scope>NUCLEOTIDE SEQUENCE [LARGE SCALE GENOMIC DNA]</scope>
    <source>
        <strain>ATCC 33277 / DSM 20709 / CIP 103683 / JCM 12257 / NCTC 11834 / 2561</strain>
    </source>
</reference>
<name>SECA_PORG3</name>
<feature type="chain" id="PRO_1000145042" description="Protein translocase subunit SecA">
    <location>
        <begin position="1"/>
        <end position="1113"/>
    </location>
</feature>
<feature type="region of interest" description="Disordered" evidence="2">
    <location>
        <begin position="1042"/>
        <end position="1113"/>
    </location>
</feature>
<feature type="compositionally biased region" description="Basic and acidic residues" evidence="2">
    <location>
        <begin position="1042"/>
        <end position="1072"/>
    </location>
</feature>
<feature type="compositionally biased region" description="Basic residues" evidence="2">
    <location>
        <begin position="1103"/>
        <end position="1113"/>
    </location>
</feature>
<feature type="binding site" evidence="1">
    <location>
        <position position="175"/>
    </location>
    <ligand>
        <name>ATP</name>
        <dbReference type="ChEBI" id="CHEBI:30616"/>
    </ligand>
</feature>
<feature type="binding site" evidence="1">
    <location>
        <begin position="193"/>
        <end position="197"/>
    </location>
    <ligand>
        <name>ATP</name>
        <dbReference type="ChEBI" id="CHEBI:30616"/>
    </ligand>
</feature>
<feature type="binding site" evidence="1">
    <location>
        <position position="694"/>
    </location>
    <ligand>
        <name>ATP</name>
        <dbReference type="ChEBI" id="CHEBI:30616"/>
    </ligand>
</feature>
<feature type="binding site" evidence="1">
    <location>
        <position position="1097"/>
    </location>
    <ligand>
        <name>Zn(2+)</name>
        <dbReference type="ChEBI" id="CHEBI:29105"/>
    </ligand>
</feature>
<feature type="binding site" evidence="1">
    <location>
        <position position="1099"/>
    </location>
    <ligand>
        <name>Zn(2+)</name>
        <dbReference type="ChEBI" id="CHEBI:29105"/>
    </ligand>
</feature>
<feature type="binding site" evidence="1">
    <location>
        <position position="1108"/>
    </location>
    <ligand>
        <name>Zn(2+)</name>
        <dbReference type="ChEBI" id="CHEBI:29105"/>
    </ligand>
</feature>
<feature type="binding site" evidence="1">
    <location>
        <position position="1109"/>
    </location>
    <ligand>
        <name>Zn(2+)</name>
        <dbReference type="ChEBI" id="CHEBI:29105"/>
    </ligand>
</feature>
<comment type="function">
    <text evidence="1">Part of the Sec protein translocase complex. Interacts with the SecYEG preprotein conducting channel. Has a central role in coupling the hydrolysis of ATP to the transfer of proteins into and across the cell membrane, serving as an ATP-driven molecular motor driving the stepwise translocation of polypeptide chains across the membrane.</text>
</comment>
<comment type="catalytic activity">
    <reaction evidence="1">
        <text>ATP + H2O + cellular proteinSide 1 = ADP + phosphate + cellular proteinSide 2.</text>
        <dbReference type="EC" id="7.4.2.8"/>
    </reaction>
</comment>
<comment type="cofactor">
    <cofactor evidence="1">
        <name>Zn(2+)</name>
        <dbReference type="ChEBI" id="CHEBI:29105"/>
    </cofactor>
    <text evidence="1">May bind 1 zinc ion per subunit.</text>
</comment>
<comment type="subunit">
    <text evidence="1">Monomer and homodimer. Part of the essential Sec protein translocation apparatus which comprises SecA, SecYEG and auxiliary proteins SecDF. Other proteins may also be involved.</text>
</comment>
<comment type="subcellular location">
    <subcellularLocation>
        <location evidence="1">Cell inner membrane</location>
        <topology evidence="1">Peripheral membrane protein</topology>
        <orientation evidence="1">Cytoplasmic side</orientation>
    </subcellularLocation>
    <subcellularLocation>
        <location evidence="1">Cytoplasm</location>
    </subcellularLocation>
    <text evidence="1">Distribution is 50-50.</text>
</comment>
<comment type="similarity">
    <text evidence="1">Belongs to the SecA family.</text>
</comment>
<dbReference type="EC" id="7.4.2.8" evidence="1"/>
<dbReference type="EMBL" id="AP009380">
    <property type="protein sequence ID" value="BAG33977.1"/>
    <property type="molecule type" value="Genomic_DNA"/>
</dbReference>
<dbReference type="RefSeq" id="WP_012458284.1">
    <property type="nucleotide sequence ID" value="NC_010729.1"/>
</dbReference>
<dbReference type="SMR" id="B2RKT2"/>
<dbReference type="GeneID" id="29256642"/>
<dbReference type="KEGG" id="pgn:PGN_1458"/>
<dbReference type="eggNOG" id="COG0653">
    <property type="taxonomic scope" value="Bacteria"/>
</dbReference>
<dbReference type="HOGENOM" id="CLU_005314_3_0_10"/>
<dbReference type="OrthoDB" id="9805579at2"/>
<dbReference type="BioCyc" id="PGIN431947:G1G2V-1660-MONOMER"/>
<dbReference type="Proteomes" id="UP000008842">
    <property type="component" value="Chromosome"/>
</dbReference>
<dbReference type="GO" id="GO:0031522">
    <property type="term" value="C:cell envelope Sec protein transport complex"/>
    <property type="evidence" value="ECO:0007669"/>
    <property type="project" value="TreeGrafter"/>
</dbReference>
<dbReference type="GO" id="GO:0005829">
    <property type="term" value="C:cytosol"/>
    <property type="evidence" value="ECO:0007669"/>
    <property type="project" value="TreeGrafter"/>
</dbReference>
<dbReference type="GO" id="GO:0005886">
    <property type="term" value="C:plasma membrane"/>
    <property type="evidence" value="ECO:0007669"/>
    <property type="project" value="UniProtKB-SubCell"/>
</dbReference>
<dbReference type="GO" id="GO:0005524">
    <property type="term" value="F:ATP binding"/>
    <property type="evidence" value="ECO:0007669"/>
    <property type="project" value="UniProtKB-UniRule"/>
</dbReference>
<dbReference type="GO" id="GO:0046872">
    <property type="term" value="F:metal ion binding"/>
    <property type="evidence" value="ECO:0007669"/>
    <property type="project" value="UniProtKB-KW"/>
</dbReference>
<dbReference type="GO" id="GO:0008564">
    <property type="term" value="F:protein-exporting ATPase activity"/>
    <property type="evidence" value="ECO:0007669"/>
    <property type="project" value="UniProtKB-EC"/>
</dbReference>
<dbReference type="GO" id="GO:0065002">
    <property type="term" value="P:intracellular protein transmembrane transport"/>
    <property type="evidence" value="ECO:0007669"/>
    <property type="project" value="UniProtKB-UniRule"/>
</dbReference>
<dbReference type="GO" id="GO:0017038">
    <property type="term" value="P:protein import"/>
    <property type="evidence" value="ECO:0007669"/>
    <property type="project" value="InterPro"/>
</dbReference>
<dbReference type="GO" id="GO:0006605">
    <property type="term" value="P:protein targeting"/>
    <property type="evidence" value="ECO:0007669"/>
    <property type="project" value="UniProtKB-UniRule"/>
</dbReference>
<dbReference type="GO" id="GO:0043952">
    <property type="term" value="P:protein transport by the Sec complex"/>
    <property type="evidence" value="ECO:0007669"/>
    <property type="project" value="TreeGrafter"/>
</dbReference>
<dbReference type="CDD" id="cd17928">
    <property type="entry name" value="DEXDc_SecA"/>
    <property type="match status" value="1"/>
</dbReference>
<dbReference type="CDD" id="cd18803">
    <property type="entry name" value="SF2_C_secA"/>
    <property type="match status" value="1"/>
</dbReference>
<dbReference type="FunFam" id="3.40.50.300:FF:000246">
    <property type="entry name" value="Preprotein translocase subunit SecA"/>
    <property type="match status" value="1"/>
</dbReference>
<dbReference type="FunFam" id="3.40.50.300:FF:000694">
    <property type="entry name" value="Preprotein translocase subunit SecA"/>
    <property type="match status" value="1"/>
</dbReference>
<dbReference type="Gene3D" id="1.10.3060.10">
    <property type="entry name" value="Helical scaffold and wing domains of SecA"/>
    <property type="match status" value="1"/>
</dbReference>
<dbReference type="Gene3D" id="3.40.50.300">
    <property type="entry name" value="P-loop containing nucleotide triphosphate hydrolases"/>
    <property type="match status" value="3"/>
</dbReference>
<dbReference type="Gene3D" id="3.90.1440.10">
    <property type="entry name" value="SecA, preprotein cross-linking domain"/>
    <property type="match status" value="1"/>
</dbReference>
<dbReference type="HAMAP" id="MF_01382">
    <property type="entry name" value="SecA"/>
    <property type="match status" value="1"/>
</dbReference>
<dbReference type="InterPro" id="IPR014001">
    <property type="entry name" value="Helicase_ATP-bd"/>
</dbReference>
<dbReference type="InterPro" id="IPR001650">
    <property type="entry name" value="Helicase_C-like"/>
</dbReference>
<dbReference type="InterPro" id="IPR027417">
    <property type="entry name" value="P-loop_NTPase"/>
</dbReference>
<dbReference type="InterPro" id="IPR004027">
    <property type="entry name" value="SEC_C_motif"/>
</dbReference>
<dbReference type="InterPro" id="IPR000185">
    <property type="entry name" value="SecA"/>
</dbReference>
<dbReference type="InterPro" id="IPR020937">
    <property type="entry name" value="SecA_CS"/>
</dbReference>
<dbReference type="InterPro" id="IPR011115">
    <property type="entry name" value="SecA_DEAD"/>
</dbReference>
<dbReference type="InterPro" id="IPR014018">
    <property type="entry name" value="SecA_motor_DEAD"/>
</dbReference>
<dbReference type="InterPro" id="IPR011130">
    <property type="entry name" value="SecA_preprotein_X-link_dom"/>
</dbReference>
<dbReference type="InterPro" id="IPR044722">
    <property type="entry name" value="SecA_SF2_C"/>
</dbReference>
<dbReference type="InterPro" id="IPR011116">
    <property type="entry name" value="SecA_Wing/Scaffold"/>
</dbReference>
<dbReference type="InterPro" id="IPR036266">
    <property type="entry name" value="SecA_Wing/Scaffold_sf"/>
</dbReference>
<dbReference type="InterPro" id="IPR036670">
    <property type="entry name" value="SecA_X-link_sf"/>
</dbReference>
<dbReference type="NCBIfam" id="NF009536">
    <property type="entry name" value="PRK12901.1"/>
    <property type="match status" value="1"/>
</dbReference>
<dbReference type="NCBIfam" id="TIGR00963">
    <property type="entry name" value="secA"/>
    <property type="match status" value="1"/>
</dbReference>
<dbReference type="PANTHER" id="PTHR30612:SF0">
    <property type="entry name" value="CHLOROPLAST PROTEIN-TRANSPORTING ATPASE"/>
    <property type="match status" value="1"/>
</dbReference>
<dbReference type="PANTHER" id="PTHR30612">
    <property type="entry name" value="SECA INNER MEMBRANE COMPONENT OF SEC PROTEIN SECRETION SYSTEM"/>
    <property type="match status" value="1"/>
</dbReference>
<dbReference type="Pfam" id="PF21090">
    <property type="entry name" value="P-loop_SecA"/>
    <property type="match status" value="1"/>
</dbReference>
<dbReference type="Pfam" id="PF02810">
    <property type="entry name" value="SEC-C"/>
    <property type="match status" value="1"/>
</dbReference>
<dbReference type="Pfam" id="PF07517">
    <property type="entry name" value="SecA_DEAD"/>
    <property type="match status" value="1"/>
</dbReference>
<dbReference type="Pfam" id="PF01043">
    <property type="entry name" value="SecA_PP_bind"/>
    <property type="match status" value="1"/>
</dbReference>
<dbReference type="Pfam" id="PF07516">
    <property type="entry name" value="SecA_SW"/>
    <property type="match status" value="1"/>
</dbReference>
<dbReference type="PRINTS" id="PR00906">
    <property type="entry name" value="SECA"/>
</dbReference>
<dbReference type="SMART" id="SM00957">
    <property type="entry name" value="SecA_DEAD"/>
    <property type="match status" value="1"/>
</dbReference>
<dbReference type="SMART" id="SM00958">
    <property type="entry name" value="SecA_PP_bind"/>
    <property type="match status" value="1"/>
</dbReference>
<dbReference type="SUPFAM" id="SSF81886">
    <property type="entry name" value="Helical scaffold and wing domains of SecA"/>
    <property type="match status" value="1"/>
</dbReference>
<dbReference type="SUPFAM" id="SSF52540">
    <property type="entry name" value="P-loop containing nucleoside triphosphate hydrolases"/>
    <property type="match status" value="2"/>
</dbReference>
<dbReference type="SUPFAM" id="SSF81767">
    <property type="entry name" value="Pre-protein crosslinking domain of SecA"/>
    <property type="match status" value="1"/>
</dbReference>
<dbReference type="PROSITE" id="PS01312">
    <property type="entry name" value="SECA"/>
    <property type="match status" value="1"/>
</dbReference>
<dbReference type="PROSITE" id="PS51196">
    <property type="entry name" value="SECA_MOTOR_DEAD"/>
    <property type="match status" value="1"/>
</dbReference>
<protein>
    <recommendedName>
        <fullName evidence="1">Protein translocase subunit SecA</fullName>
        <ecNumber evidence="1">7.4.2.8</ecNumber>
    </recommendedName>
</protein>
<evidence type="ECO:0000255" key="1">
    <source>
        <dbReference type="HAMAP-Rule" id="MF_01382"/>
    </source>
</evidence>
<evidence type="ECO:0000256" key="2">
    <source>
        <dbReference type="SAM" id="MobiDB-lite"/>
    </source>
</evidence>
<sequence length="1113" mass="127241">MGFNEFMSKLFGNKSQRDLKEVKPFVDKIKVAYGEIERLSDDDLRGRTAILRQKIQDYVKDERAEIDKLKVEVEGKDLDEREEIWAKVDKLEKEILDKMEVVLDEILPEAFAIIKDTARRFAQNETIRVKATDLDRDLAINHDFVSIEGDTAVYQNHWVAGGNEILWDMIHYDVQLIGGTVLHKGKIAEMATGEGKTLVATLPVFLNALTGNGVHVVTVNDYLSKRDSEWMGPLYMFHGLTVDCIDKHQPNSDARRKAYNADITFGTNNEFGFDYLRDNMATSPKDLVQRKHNYAIVDEVDSVLIDDARTPLIISGPTPKGEDQLFEEFLPNVEKVVEAQRKLCSQLLIDAKNKMASEDKKEQEEGSLLLYRSFKGLPKNKQLIKYLSEPGIKSSMLKTEEAYMAENMRNMHLVTDELYFIIDEKRNSVELTEKGIDLLTSRTDDPKFFVLPDIAAELSALDNMESDAEKRREAKDEIIANYSIKSERVHTVNQLLKAYALFEKDDQYVVMDNKVLIVDEQTGRIMDGRRYSDGLHQAIEAKEHVKVEAATQTFATITLQNYFRMYHKLAGMTGTAETEAGELWDIYKLDVVVIPTNKPIARKDMNDRIYKTAREKYAAVIEEIVRLVEEGRPVLVGTTSVEISELLSRMLRLRGIQHNVLNAKLHQKEAEIVAQAGQKGTVTIATNMAGRGTDIKLSAEVKKAGGLAIIGTERHESRRVDRQLRGRSGRQGDPGSSIFYVSLEDHLMRLFATEKIASLMDRLGFKEGEVLENNMLSKSVERAQKKVEENNFGIRKHLLEYDDVMNSQREVIYTRRRHALMGERIGMDVLNTIYDVCKALIDNYAEANDFEGFKEDLMRALAIESPITQEIFRGKKAEELTDMLFDEAYKSFQRKMDLIAEVAHPVVHQVFETQAAVYERILIPITDGKRVYNIGCNLREADETRGKSIIKEFEKAIVLHTIDESWKEHLREMDELRNSVQNASYENKDPLLIYKLESYELFRKMVEAMNRKTVAILMRARIPVPEAPSQEELEHRRQIEIRHAAEQRTDMSKYRTQKDDIEAQQKAQRDAASRPQGAAAPQTPIRNENKIGRNDPCPCGSGKKFKQCHGRNL</sequence>
<gene>
    <name evidence="1" type="primary">secA</name>
    <name type="ordered locus">PGN_1458</name>
</gene>
<accession>B2RKT2</accession>
<organism>
    <name type="scientific">Porphyromonas gingivalis (strain ATCC 33277 / DSM 20709 / CIP 103683 / JCM 12257 / NCTC 11834 / 2561)</name>
    <dbReference type="NCBI Taxonomy" id="431947"/>
    <lineage>
        <taxon>Bacteria</taxon>
        <taxon>Pseudomonadati</taxon>
        <taxon>Bacteroidota</taxon>
        <taxon>Bacteroidia</taxon>
        <taxon>Bacteroidales</taxon>
        <taxon>Porphyromonadaceae</taxon>
        <taxon>Porphyromonas</taxon>
    </lineage>
</organism>
<keyword id="KW-0067">ATP-binding</keyword>
<keyword id="KW-0997">Cell inner membrane</keyword>
<keyword id="KW-1003">Cell membrane</keyword>
<keyword id="KW-0963">Cytoplasm</keyword>
<keyword id="KW-0472">Membrane</keyword>
<keyword id="KW-0479">Metal-binding</keyword>
<keyword id="KW-0547">Nucleotide-binding</keyword>
<keyword id="KW-0653">Protein transport</keyword>
<keyword id="KW-1278">Translocase</keyword>
<keyword id="KW-0811">Translocation</keyword>
<keyword id="KW-0813">Transport</keyword>
<keyword id="KW-0862">Zinc</keyword>